<accession>Q033M5</accession>
<evidence type="ECO:0000255" key="1">
    <source>
        <dbReference type="HAMAP-Rule" id="MF_01241"/>
    </source>
</evidence>
<feature type="chain" id="PRO_1000066991" description="Glucosamine-6-phosphate deaminase">
    <location>
        <begin position="1"/>
        <end position="236"/>
    </location>
</feature>
<feature type="active site" description="Proton acceptor; for enolization step" evidence="1">
    <location>
        <position position="62"/>
    </location>
</feature>
<feature type="active site" description="For ring-opening step" evidence="1">
    <location>
        <position position="128"/>
    </location>
</feature>
<feature type="active site" description="Proton acceptor; for ring-opening step" evidence="1">
    <location>
        <position position="130"/>
    </location>
</feature>
<feature type="active site" description="For ring-opening step" evidence="1">
    <location>
        <position position="135"/>
    </location>
</feature>
<gene>
    <name evidence="1" type="primary">nagB</name>
    <name type="ordered locus">LSEI_2889</name>
</gene>
<organism>
    <name type="scientific">Lacticaseibacillus paracasei (strain ATCC 334 / BCRC 17002 / CCUG 31169 / CIP 107868 / KCTC 3260 / NRRL B-441)</name>
    <name type="common">Lactobacillus paracasei</name>
    <dbReference type="NCBI Taxonomy" id="321967"/>
    <lineage>
        <taxon>Bacteria</taxon>
        <taxon>Bacillati</taxon>
        <taxon>Bacillota</taxon>
        <taxon>Bacilli</taxon>
        <taxon>Lactobacillales</taxon>
        <taxon>Lactobacillaceae</taxon>
        <taxon>Lacticaseibacillus</taxon>
    </lineage>
</organism>
<reference key="1">
    <citation type="journal article" date="2006" name="Proc. Natl. Acad. Sci. U.S.A.">
        <title>Comparative genomics of the lactic acid bacteria.</title>
        <authorList>
            <person name="Makarova K.S."/>
            <person name="Slesarev A."/>
            <person name="Wolf Y.I."/>
            <person name="Sorokin A."/>
            <person name="Mirkin B."/>
            <person name="Koonin E.V."/>
            <person name="Pavlov A."/>
            <person name="Pavlova N."/>
            <person name="Karamychev V."/>
            <person name="Polouchine N."/>
            <person name="Shakhova V."/>
            <person name="Grigoriev I."/>
            <person name="Lou Y."/>
            <person name="Rohksar D."/>
            <person name="Lucas S."/>
            <person name="Huang K."/>
            <person name="Goodstein D.M."/>
            <person name="Hawkins T."/>
            <person name="Plengvidhya V."/>
            <person name="Welker D."/>
            <person name="Hughes J."/>
            <person name="Goh Y."/>
            <person name="Benson A."/>
            <person name="Baldwin K."/>
            <person name="Lee J.-H."/>
            <person name="Diaz-Muniz I."/>
            <person name="Dosti B."/>
            <person name="Smeianov V."/>
            <person name="Wechter W."/>
            <person name="Barabote R."/>
            <person name="Lorca G."/>
            <person name="Altermann E."/>
            <person name="Barrangou R."/>
            <person name="Ganesan B."/>
            <person name="Xie Y."/>
            <person name="Rawsthorne H."/>
            <person name="Tamir D."/>
            <person name="Parker C."/>
            <person name="Breidt F."/>
            <person name="Broadbent J.R."/>
            <person name="Hutkins R."/>
            <person name="O'Sullivan D."/>
            <person name="Steele J."/>
            <person name="Unlu G."/>
            <person name="Saier M.H. Jr."/>
            <person name="Klaenhammer T."/>
            <person name="Richardson P."/>
            <person name="Kozyavkin S."/>
            <person name="Weimer B.C."/>
            <person name="Mills D.A."/>
        </authorList>
    </citation>
    <scope>NUCLEOTIDE SEQUENCE [LARGE SCALE GENOMIC DNA]</scope>
    <source>
        <strain>ATCC 334 / BCRC 17002 / CCUG 31169 / CIP 107868 / KCTC 3260 / NRRL B-441</strain>
    </source>
</reference>
<name>NAGB_LACP3</name>
<keyword id="KW-0119">Carbohydrate metabolism</keyword>
<keyword id="KW-0378">Hydrolase</keyword>
<keyword id="KW-1185">Reference proteome</keyword>
<sequence length="236" mass="25824">MDVKIFDNDTEAGKYAFDLIKQGMDNGAKVLGLATGSTPVTMYKAMVNSDVDFSNMTSINLDEYVGLAPDNDQSYRYFMQSNLFDKKPFKETFVPNGLAKGPEEETTRYNKVIADHPINIQVLGIGRNGHIGFNEPGSPFDAETRKVPLTQSTIDANARFFASEDDVPRYAYSMGIGSILKSKKILLLAFGENKADAVKKMIEGPVTNDVPASALQKHSDVVVILDKAAASKLSKK</sequence>
<proteinExistence type="inferred from homology"/>
<protein>
    <recommendedName>
        <fullName evidence="1">Glucosamine-6-phosphate deaminase</fullName>
        <ecNumber evidence="1">3.5.99.6</ecNumber>
    </recommendedName>
    <alternativeName>
        <fullName evidence="1">GlcN6P deaminase</fullName>
        <shortName evidence="1">GNPDA</shortName>
    </alternativeName>
    <alternativeName>
        <fullName evidence="1">Glucosamine-6-phosphate isomerase</fullName>
    </alternativeName>
</protein>
<dbReference type="EC" id="3.5.99.6" evidence="1"/>
<dbReference type="EMBL" id="CP000423">
    <property type="protein sequence ID" value="ABJ71597.1"/>
    <property type="molecule type" value="Genomic_DNA"/>
</dbReference>
<dbReference type="RefSeq" id="WP_011675068.1">
    <property type="nucleotide sequence ID" value="NC_008526.1"/>
</dbReference>
<dbReference type="RefSeq" id="YP_808039.1">
    <property type="nucleotide sequence ID" value="NC_008526.1"/>
</dbReference>
<dbReference type="SMR" id="Q033M5"/>
<dbReference type="STRING" id="321967.LSEI_2889"/>
<dbReference type="PaxDb" id="321967-LSEI_2889"/>
<dbReference type="KEGG" id="lca:LSEI_2889"/>
<dbReference type="PATRIC" id="fig|321967.11.peg.2831"/>
<dbReference type="HOGENOM" id="CLU_049611_1_0_9"/>
<dbReference type="UniPathway" id="UPA00629">
    <property type="reaction ID" value="UER00684"/>
</dbReference>
<dbReference type="Proteomes" id="UP000001651">
    <property type="component" value="Chromosome"/>
</dbReference>
<dbReference type="GO" id="GO:0005737">
    <property type="term" value="C:cytoplasm"/>
    <property type="evidence" value="ECO:0007669"/>
    <property type="project" value="TreeGrafter"/>
</dbReference>
<dbReference type="GO" id="GO:0004342">
    <property type="term" value="F:glucosamine-6-phosphate deaminase activity"/>
    <property type="evidence" value="ECO:0007669"/>
    <property type="project" value="UniProtKB-UniRule"/>
</dbReference>
<dbReference type="GO" id="GO:0042802">
    <property type="term" value="F:identical protein binding"/>
    <property type="evidence" value="ECO:0007669"/>
    <property type="project" value="TreeGrafter"/>
</dbReference>
<dbReference type="GO" id="GO:0005975">
    <property type="term" value="P:carbohydrate metabolic process"/>
    <property type="evidence" value="ECO:0007669"/>
    <property type="project" value="InterPro"/>
</dbReference>
<dbReference type="GO" id="GO:0006043">
    <property type="term" value="P:glucosamine catabolic process"/>
    <property type="evidence" value="ECO:0007669"/>
    <property type="project" value="TreeGrafter"/>
</dbReference>
<dbReference type="GO" id="GO:0006046">
    <property type="term" value="P:N-acetylglucosamine catabolic process"/>
    <property type="evidence" value="ECO:0007669"/>
    <property type="project" value="TreeGrafter"/>
</dbReference>
<dbReference type="GO" id="GO:0019262">
    <property type="term" value="P:N-acetylneuraminate catabolic process"/>
    <property type="evidence" value="ECO:0007669"/>
    <property type="project" value="UniProtKB-UniRule"/>
</dbReference>
<dbReference type="CDD" id="cd01399">
    <property type="entry name" value="GlcN6P_deaminase"/>
    <property type="match status" value="1"/>
</dbReference>
<dbReference type="FunFam" id="3.40.50.1360:FF:000003">
    <property type="entry name" value="Glucosamine-6-phosphate deaminase"/>
    <property type="match status" value="1"/>
</dbReference>
<dbReference type="Gene3D" id="3.40.50.1360">
    <property type="match status" value="1"/>
</dbReference>
<dbReference type="HAMAP" id="MF_01241">
    <property type="entry name" value="GlcN6P_deamin"/>
    <property type="match status" value="1"/>
</dbReference>
<dbReference type="InterPro" id="IPR006148">
    <property type="entry name" value="Glc/Gal-6P_isomerase"/>
</dbReference>
<dbReference type="InterPro" id="IPR004547">
    <property type="entry name" value="Glucosamine6P_isomerase"/>
</dbReference>
<dbReference type="InterPro" id="IPR018321">
    <property type="entry name" value="Glucosamine6P_isomerase_CS"/>
</dbReference>
<dbReference type="InterPro" id="IPR037171">
    <property type="entry name" value="NagB/RpiA_transferase-like"/>
</dbReference>
<dbReference type="NCBIfam" id="TIGR00502">
    <property type="entry name" value="nagB"/>
    <property type="match status" value="1"/>
</dbReference>
<dbReference type="PANTHER" id="PTHR11280">
    <property type="entry name" value="GLUCOSAMINE-6-PHOSPHATE ISOMERASE"/>
    <property type="match status" value="1"/>
</dbReference>
<dbReference type="PANTHER" id="PTHR11280:SF5">
    <property type="entry name" value="GLUCOSAMINE-6-PHOSPHATE ISOMERASE"/>
    <property type="match status" value="1"/>
</dbReference>
<dbReference type="Pfam" id="PF01182">
    <property type="entry name" value="Glucosamine_iso"/>
    <property type="match status" value="1"/>
</dbReference>
<dbReference type="SUPFAM" id="SSF100950">
    <property type="entry name" value="NagB/RpiA/CoA transferase-like"/>
    <property type="match status" value="1"/>
</dbReference>
<dbReference type="PROSITE" id="PS01161">
    <property type="entry name" value="GLC_GALNAC_ISOMERASE"/>
    <property type="match status" value="1"/>
</dbReference>
<comment type="function">
    <text evidence="1">Catalyzes the reversible isomerization-deamination of glucosamine 6-phosphate (GlcN6P) to form fructose 6-phosphate (Fru6P) and ammonium ion.</text>
</comment>
<comment type="catalytic activity">
    <reaction evidence="1">
        <text>alpha-D-glucosamine 6-phosphate + H2O = beta-D-fructose 6-phosphate + NH4(+)</text>
        <dbReference type="Rhea" id="RHEA:12172"/>
        <dbReference type="ChEBI" id="CHEBI:15377"/>
        <dbReference type="ChEBI" id="CHEBI:28938"/>
        <dbReference type="ChEBI" id="CHEBI:57634"/>
        <dbReference type="ChEBI" id="CHEBI:75989"/>
        <dbReference type="EC" id="3.5.99.6"/>
    </reaction>
</comment>
<comment type="pathway">
    <text evidence="1">Amino-sugar metabolism; N-acetylneuraminate degradation; D-fructose 6-phosphate from N-acetylneuraminate: step 5/5.</text>
</comment>
<comment type="similarity">
    <text evidence="1">Belongs to the glucosamine/galactosamine-6-phosphate isomerase family. NagB subfamily.</text>
</comment>